<name>METXS_PSEU2</name>
<keyword id="KW-0012">Acyltransferase</keyword>
<keyword id="KW-0028">Amino-acid biosynthesis</keyword>
<keyword id="KW-0963">Cytoplasm</keyword>
<keyword id="KW-0486">Methionine biosynthesis</keyword>
<keyword id="KW-0808">Transferase</keyword>
<feature type="chain" id="PRO_0000231883" description="Homoserine O-succinyltransferase">
    <location>
        <begin position="1"/>
        <end position="379"/>
    </location>
</feature>
<feature type="domain" description="AB hydrolase-1" evidence="1">
    <location>
        <begin position="51"/>
        <end position="360"/>
    </location>
</feature>
<feature type="active site" description="Nucleophile" evidence="1">
    <location>
        <position position="157"/>
    </location>
</feature>
<feature type="active site" evidence="1">
    <location>
        <position position="323"/>
    </location>
</feature>
<feature type="active site" evidence="1">
    <location>
        <position position="356"/>
    </location>
</feature>
<feature type="binding site" evidence="1">
    <location>
        <position position="227"/>
    </location>
    <ligand>
        <name>substrate</name>
    </ligand>
</feature>
<feature type="binding site" evidence="1">
    <location>
        <position position="357"/>
    </location>
    <ligand>
        <name>substrate</name>
    </ligand>
</feature>
<feature type="site" description="Important for acyl-CoA specificity" evidence="1 4">
    <location>
        <position position="325"/>
    </location>
</feature>
<evidence type="ECO:0000255" key="1">
    <source>
        <dbReference type="HAMAP-Rule" id="MF_00296"/>
    </source>
</evidence>
<evidence type="ECO:0000269" key="2">
    <source>
    </source>
</evidence>
<evidence type="ECO:0000303" key="3">
    <source>
    </source>
</evidence>
<evidence type="ECO:0000305" key="4">
    <source>
    </source>
</evidence>
<comment type="function">
    <text evidence="1 2">Transfers a succinyl group from succinyl-CoA to L-homoserine, forming succinyl-L-homoserine.</text>
</comment>
<comment type="catalytic activity">
    <reaction evidence="1 2">
        <text>L-homoserine + succinyl-CoA = O-succinyl-L-homoserine + CoA</text>
        <dbReference type="Rhea" id="RHEA:22008"/>
        <dbReference type="ChEBI" id="CHEBI:57287"/>
        <dbReference type="ChEBI" id="CHEBI:57292"/>
        <dbReference type="ChEBI" id="CHEBI:57476"/>
        <dbReference type="ChEBI" id="CHEBI:57661"/>
        <dbReference type="EC" id="2.3.1.46"/>
    </reaction>
</comment>
<comment type="activity regulation">
    <text evidence="2">Requires MetW for activity.</text>
</comment>
<comment type="pathway">
    <text evidence="1">Amino-acid biosynthesis; L-methionine biosynthesis via de novo pathway; O-succinyl-L-homoserine from L-homoserine: step 1/1.</text>
</comment>
<comment type="subunit">
    <text evidence="1">Homodimer.</text>
</comment>
<comment type="subcellular location">
    <subcellularLocation>
        <location evidence="1">Cytoplasm</location>
    </subcellularLocation>
</comment>
<comment type="similarity">
    <text evidence="1">Belongs to the AB hydrolase superfamily. MetX family.</text>
</comment>
<gene>
    <name evidence="1 3" type="primary">metXS</name>
    <name type="ordered locus">Psyr_0474</name>
</gene>
<accession>Q4ZZ78</accession>
<proteinExistence type="evidence at protein level"/>
<protein>
    <recommendedName>
        <fullName evidence="1">Homoserine O-succinyltransferase</fullName>
        <shortName evidence="1 3">HST</shortName>
        <ecNumber evidence="1 2">2.3.1.46</ecNumber>
    </recommendedName>
    <alternativeName>
        <fullName evidence="1">Homoserine transsuccinylase</fullName>
        <shortName evidence="1">HTS</shortName>
    </alternativeName>
</protein>
<organism>
    <name type="scientific">Pseudomonas syringae pv. syringae (strain B728a)</name>
    <dbReference type="NCBI Taxonomy" id="205918"/>
    <lineage>
        <taxon>Bacteria</taxon>
        <taxon>Pseudomonadati</taxon>
        <taxon>Pseudomonadota</taxon>
        <taxon>Gammaproteobacteria</taxon>
        <taxon>Pseudomonadales</taxon>
        <taxon>Pseudomonadaceae</taxon>
        <taxon>Pseudomonas</taxon>
        <taxon>Pseudomonas syringae</taxon>
    </lineage>
</organism>
<sequence>MPTVFPHDSVGLVTPQTAHFSEPLALACGRSLPAYDLIYETYGQLNAARSNAVLICHALSGHHHAAGFHSADDRKPGWWDSCIGPGKPIDTTKFFVVSLNNLGGCNGSTGPSSIDPDTGKPFGANFPVVTVEDWVNSQARLADLLGIDTWAAVIGGSLGGMQALQWTISYPNRVRHCLAIASAPKLSAQNIAFNEVARQAILTDPEFHGGSFQERGVIPKRGLMLARMVGHITYLSDDSMGEKFGRGLKSEKLNYDFHSVEFQVESYLRYQGEEFSGRFDANTYLLMTKALDYFDPAANFNDDLAKTFANATARFCVMSFTTDWRFSPARSRELVDALMAARKDVCYLEIDAPQGHDAFLIPIPRYLQAFGNYMNRISL</sequence>
<dbReference type="EC" id="2.3.1.46" evidence="1 2"/>
<dbReference type="EMBL" id="CP000075">
    <property type="protein sequence ID" value="AAY35544.1"/>
    <property type="molecule type" value="Genomic_DNA"/>
</dbReference>
<dbReference type="RefSeq" id="YP_233582.1">
    <property type="nucleotide sequence ID" value="NC_007005.1"/>
</dbReference>
<dbReference type="SMR" id="Q4ZZ78"/>
<dbReference type="STRING" id="205918.Psyr_0474"/>
<dbReference type="ESTHER" id="psesm-METX">
    <property type="family name" value="Homoserine_transacetylase"/>
</dbReference>
<dbReference type="KEGG" id="psb:Psyr_0474"/>
<dbReference type="PATRIC" id="fig|205918.7.peg.493"/>
<dbReference type="eggNOG" id="COG2021">
    <property type="taxonomic scope" value="Bacteria"/>
</dbReference>
<dbReference type="HOGENOM" id="CLU_028760_1_2_6"/>
<dbReference type="OrthoDB" id="9800754at2"/>
<dbReference type="UniPathway" id="UPA00051">
    <property type="reaction ID" value="UER00075"/>
</dbReference>
<dbReference type="Proteomes" id="UP000000426">
    <property type="component" value="Chromosome"/>
</dbReference>
<dbReference type="GO" id="GO:0005737">
    <property type="term" value="C:cytoplasm"/>
    <property type="evidence" value="ECO:0007669"/>
    <property type="project" value="UniProtKB-SubCell"/>
</dbReference>
<dbReference type="GO" id="GO:0004414">
    <property type="term" value="F:homoserine O-acetyltransferase activity"/>
    <property type="evidence" value="ECO:0007669"/>
    <property type="project" value="TreeGrafter"/>
</dbReference>
<dbReference type="GO" id="GO:0008899">
    <property type="term" value="F:homoserine O-succinyltransferase activity"/>
    <property type="evidence" value="ECO:0007669"/>
    <property type="project" value="UniProtKB-UniRule"/>
</dbReference>
<dbReference type="GO" id="GO:0009092">
    <property type="term" value="P:homoserine metabolic process"/>
    <property type="evidence" value="ECO:0007669"/>
    <property type="project" value="TreeGrafter"/>
</dbReference>
<dbReference type="GO" id="GO:0009086">
    <property type="term" value="P:methionine biosynthetic process"/>
    <property type="evidence" value="ECO:0007669"/>
    <property type="project" value="UniProtKB-UniRule"/>
</dbReference>
<dbReference type="FunFam" id="1.10.1740.110:FF:000001">
    <property type="entry name" value="Homoserine O-acetyltransferase"/>
    <property type="match status" value="1"/>
</dbReference>
<dbReference type="Gene3D" id="1.10.1740.110">
    <property type="match status" value="1"/>
</dbReference>
<dbReference type="Gene3D" id="3.40.50.1820">
    <property type="entry name" value="alpha/beta hydrolase"/>
    <property type="match status" value="1"/>
</dbReference>
<dbReference type="HAMAP" id="MF_00296">
    <property type="entry name" value="MetX_acyltransf"/>
    <property type="match status" value="1"/>
</dbReference>
<dbReference type="InterPro" id="IPR000073">
    <property type="entry name" value="AB_hydrolase_1"/>
</dbReference>
<dbReference type="InterPro" id="IPR029058">
    <property type="entry name" value="AB_hydrolase_fold"/>
</dbReference>
<dbReference type="InterPro" id="IPR008220">
    <property type="entry name" value="HAT_MetX-like"/>
</dbReference>
<dbReference type="NCBIfam" id="TIGR01392">
    <property type="entry name" value="homoserO_Ac_trn"/>
    <property type="match status" value="1"/>
</dbReference>
<dbReference type="NCBIfam" id="NF001209">
    <property type="entry name" value="PRK00175.1"/>
    <property type="match status" value="1"/>
</dbReference>
<dbReference type="PANTHER" id="PTHR32268">
    <property type="entry name" value="HOMOSERINE O-ACETYLTRANSFERASE"/>
    <property type="match status" value="1"/>
</dbReference>
<dbReference type="PANTHER" id="PTHR32268:SF11">
    <property type="entry name" value="HOMOSERINE O-ACETYLTRANSFERASE"/>
    <property type="match status" value="1"/>
</dbReference>
<dbReference type="Pfam" id="PF00561">
    <property type="entry name" value="Abhydrolase_1"/>
    <property type="match status" value="1"/>
</dbReference>
<dbReference type="PIRSF" id="PIRSF000443">
    <property type="entry name" value="Homoser_Ac_trans"/>
    <property type="match status" value="1"/>
</dbReference>
<dbReference type="SUPFAM" id="SSF53474">
    <property type="entry name" value="alpha/beta-Hydrolases"/>
    <property type="match status" value="1"/>
</dbReference>
<reference key="1">
    <citation type="journal article" date="2005" name="Proc. Natl. Acad. Sci. U.S.A.">
        <title>Comparison of the complete genome sequences of Pseudomonas syringae pv. syringae B728a and pv. tomato DC3000.</title>
        <authorList>
            <person name="Feil H."/>
            <person name="Feil W.S."/>
            <person name="Chain P."/>
            <person name="Larimer F."/>
            <person name="Dibartolo G."/>
            <person name="Copeland A."/>
            <person name="Lykidis A."/>
            <person name="Trong S."/>
            <person name="Nolan M."/>
            <person name="Goltsman E."/>
            <person name="Thiel J."/>
            <person name="Malfatti S."/>
            <person name="Loper J.E."/>
            <person name="Lapidus A."/>
            <person name="Detter J.C."/>
            <person name="Land M."/>
            <person name="Richardson P.M."/>
            <person name="Kyrpides N.C."/>
            <person name="Ivanova N."/>
            <person name="Lindow S.E."/>
        </authorList>
    </citation>
    <scope>NUCLEOTIDE SEQUENCE [LARGE SCALE GENOMIC DNA]</scope>
    <source>
        <strain>B728a</strain>
    </source>
</reference>
<reference key="2">
    <citation type="journal article" date="2017" name="Nat. Chem. Biol.">
        <title>Parallel evolution of non-homologous isofunctional enzymes in methionine biosynthesis.</title>
        <authorList>
            <person name="Bastard K."/>
            <person name="Perret A."/>
            <person name="Mariage A."/>
            <person name="Bessonnet T."/>
            <person name="Pinet-Turpault A."/>
            <person name="Petit J.L."/>
            <person name="Darii E."/>
            <person name="Bazire P."/>
            <person name="Vergne-Vaxelaire C."/>
            <person name="Brewee C."/>
            <person name="Debard A."/>
            <person name="Pellouin V."/>
            <person name="Besnard-Gonnet M."/>
            <person name="Artiguenave F."/>
            <person name="Medigue C."/>
            <person name="Vallenet D."/>
            <person name="Danchin A."/>
            <person name="Zaparucha A."/>
            <person name="Weissenbach J."/>
            <person name="Salanoubat M."/>
            <person name="de Berardinis V."/>
        </authorList>
    </citation>
    <scope>FUNCTION</scope>
    <scope>CATALYTIC ACTIVITY</scope>
    <scope>ACTIVITY REGULATION</scope>
</reference>